<comment type="similarity">
    <text evidence="1">Belongs to the bacterial ribosomal protein bS16 family.</text>
</comment>
<organism>
    <name type="scientific">Cereibacter sphaeroides (strain ATCC 17025 / ATH 2.4.3)</name>
    <name type="common">Rhodobacter sphaeroides</name>
    <dbReference type="NCBI Taxonomy" id="349102"/>
    <lineage>
        <taxon>Bacteria</taxon>
        <taxon>Pseudomonadati</taxon>
        <taxon>Pseudomonadota</taxon>
        <taxon>Alphaproteobacteria</taxon>
        <taxon>Rhodobacterales</taxon>
        <taxon>Paracoccaceae</taxon>
        <taxon>Cereibacter</taxon>
    </lineage>
</organism>
<gene>
    <name evidence="1" type="primary">rpsP</name>
    <name type="ordered locus">Rsph17025_0181</name>
</gene>
<sequence>MAMKIRLARGGSKKRPHYSIVASDSRMPRDGRFLEKLGTYNPLLAKDSEDRIKMNVERVQYWLSQGAQPTDRVARFLEAAGLKEKAVRNNPKAAVPGKRMAELAKKKAERAAASAE</sequence>
<proteinExistence type="inferred from homology"/>
<accession>A4WNX7</accession>
<protein>
    <recommendedName>
        <fullName evidence="1">Small ribosomal subunit protein bS16</fullName>
    </recommendedName>
    <alternativeName>
        <fullName evidence="3">30S ribosomal protein S16</fullName>
    </alternativeName>
</protein>
<feature type="chain" id="PRO_1000049331" description="Small ribosomal subunit protein bS16">
    <location>
        <begin position="1"/>
        <end position="116"/>
    </location>
</feature>
<feature type="region of interest" description="Disordered" evidence="2">
    <location>
        <begin position="88"/>
        <end position="116"/>
    </location>
</feature>
<feature type="compositionally biased region" description="Basic and acidic residues" evidence="2">
    <location>
        <begin position="99"/>
        <end position="110"/>
    </location>
</feature>
<keyword id="KW-0687">Ribonucleoprotein</keyword>
<keyword id="KW-0689">Ribosomal protein</keyword>
<dbReference type="EMBL" id="CP000661">
    <property type="protein sequence ID" value="ABP69091.1"/>
    <property type="molecule type" value="Genomic_DNA"/>
</dbReference>
<dbReference type="SMR" id="A4WNX7"/>
<dbReference type="STRING" id="349102.Rsph17025_0181"/>
<dbReference type="KEGG" id="rsq:Rsph17025_0181"/>
<dbReference type="eggNOG" id="COG0228">
    <property type="taxonomic scope" value="Bacteria"/>
</dbReference>
<dbReference type="HOGENOM" id="CLU_100590_3_1_5"/>
<dbReference type="BioCyc" id="RSPH349102:G1G8M-186-MONOMER"/>
<dbReference type="GO" id="GO:0005737">
    <property type="term" value="C:cytoplasm"/>
    <property type="evidence" value="ECO:0007669"/>
    <property type="project" value="UniProtKB-ARBA"/>
</dbReference>
<dbReference type="GO" id="GO:0015935">
    <property type="term" value="C:small ribosomal subunit"/>
    <property type="evidence" value="ECO:0007669"/>
    <property type="project" value="TreeGrafter"/>
</dbReference>
<dbReference type="GO" id="GO:0003735">
    <property type="term" value="F:structural constituent of ribosome"/>
    <property type="evidence" value="ECO:0007669"/>
    <property type="project" value="InterPro"/>
</dbReference>
<dbReference type="GO" id="GO:0006412">
    <property type="term" value="P:translation"/>
    <property type="evidence" value="ECO:0007669"/>
    <property type="project" value="UniProtKB-UniRule"/>
</dbReference>
<dbReference type="Gene3D" id="3.30.1320.10">
    <property type="match status" value="1"/>
</dbReference>
<dbReference type="HAMAP" id="MF_00385">
    <property type="entry name" value="Ribosomal_bS16"/>
    <property type="match status" value="1"/>
</dbReference>
<dbReference type="InterPro" id="IPR000307">
    <property type="entry name" value="Ribosomal_bS16"/>
</dbReference>
<dbReference type="InterPro" id="IPR023803">
    <property type="entry name" value="Ribosomal_bS16_dom_sf"/>
</dbReference>
<dbReference type="NCBIfam" id="TIGR00002">
    <property type="entry name" value="S16"/>
    <property type="match status" value="1"/>
</dbReference>
<dbReference type="PANTHER" id="PTHR12919">
    <property type="entry name" value="30S RIBOSOMAL PROTEIN S16"/>
    <property type="match status" value="1"/>
</dbReference>
<dbReference type="PANTHER" id="PTHR12919:SF20">
    <property type="entry name" value="SMALL RIBOSOMAL SUBUNIT PROTEIN BS16M"/>
    <property type="match status" value="1"/>
</dbReference>
<dbReference type="Pfam" id="PF00886">
    <property type="entry name" value="Ribosomal_S16"/>
    <property type="match status" value="1"/>
</dbReference>
<dbReference type="SUPFAM" id="SSF54565">
    <property type="entry name" value="Ribosomal protein S16"/>
    <property type="match status" value="1"/>
</dbReference>
<reference key="1">
    <citation type="submission" date="2007-04" db="EMBL/GenBank/DDBJ databases">
        <title>Complete sequence of chromosome of Rhodobacter sphaeroides ATCC 17025.</title>
        <authorList>
            <consortium name="US DOE Joint Genome Institute"/>
            <person name="Copeland A."/>
            <person name="Lucas S."/>
            <person name="Lapidus A."/>
            <person name="Barry K."/>
            <person name="Detter J.C."/>
            <person name="Glavina del Rio T."/>
            <person name="Hammon N."/>
            <person name="Israni S."/>
            <person name="Dalin E."/>
            <person name="Tice H."/>
            <person name="Pitluck S."/>
            <person name="Chertkov O."/>
            <person name="Brettin T."/>
            <person name="Bruce D."/>
            <person name="Han C."/>
            <person name="Schmutz J."/>
            <person name="Larimer F."/>
            <person name="Land M."/>
            <person name="Hauser L."/>
            <person name="Kyrpides N."/>
            <person name="Kim E."/>
            <person name="Richardson P."/>
            <person name="Mackenzie C."/>
            <person name="Choudhary M."/>
            <person name="Donohue T.J."/>
            <person name="Kaplan S."/>
        </authorList>
    </citation>
    <scope>NUCLEOTIDE SEQUENCE [LARGE SCALE GENOMIC DNA]</scope>
    <source>
        <strain>ATCC 17025 / ATH 2.4.3</strain>
    </source>
</reference>
<name>RS16_CERS5</name>
<evidence type="ECO:0000255" key="1">
    <source>
        <dbReference type="HAMAP-Rule" id="MF_00385"/>
    </source>
</evidence>
<evidence type="ECO:0000256" key="2">
    <source>
        <dbReference type="SAM" id="MobiDB-lite"/>
    </source>
</evidence>
<evidence type="ECO:0000305" key="3"/>